<sequence length="220" mass="25078">MIVQHKTAKIEEDHGLFQPILRPSDISKTTDTKFIQSSPYIEKEHWLDLGTLSVGHYFLSLALQTFVPKDSVRYAHLPYAQAFDIAEIVNLIREYSHKYHKHIPAFSAYIVAFRSVLQPEVQVSPEARHKLAEIDKGSHLEANVSGGLLKYWYGIPDDVFGQNLATCWWTSKESARLGGAGKIHREGLKAVRGWYKNWKIEEYELEVIEGGSSYIFKGLS</sequence>
<accession>Q9HDU7</accession>
<comment type="subcellular location">
    <subcellularLocation>
        <location evidence="1">Cytoplasm</location>
    </subcellularLocation>
    <subcellularLocation>
        <location evidence="1">Nucleus</location>
    </subcellularLocation>
</comment>
<comment type="similarity">
    <text evidence="2">Belongs to the UPF0643 family.</text>
</comment>
<evidence type="ECO:0000269" key="1">
    <source>
    </source>
</evidence>
<evidence type="ECO:0000305" key="2"/>
<keyword id="KW-0963">Cytoplasm</keyword>
<keyword id="KW-0539">Nucleus</keyword>
<keyword id="KW-1185">Reference proteome</keyword>
<feature type="chain" id="PRO_0000350753" description="UPF0643 protein PB2B2.08">
    <location>
        <begin position="1"/>
        <end position="220"/>
    </location>
</feature>
<name>YHE8_SCHPO</name>
<protein>
    <recommendedName>
        <fullName>UPF0643 protein PB2B2.08</fullName>
    </recommendedName>
</protein>
<reference key="1">
    <citation type="journal article" date="2002" name="Nature">
        <title>The genome sequence of Schizosaccharomyces pombe.</title>
        <authorList>
            <person name="Wood V."/>
            <person name="Gwilliam R."/>
            <person name="Rajandream M.A."/>
            <person name="Lyne M.H."/>
            <person name="Lyne R."/>
            <person name="Stewart A."/>
            <person name="Sgouros J.G."/>
            <person name="Peat N."/>
            <person name="Hayles J."/>
            <person name="Baker S.G."/>
            <person name="Basham D."/>
            <person name="Bowman S."/>
            <person name="Brooks K."/>
            <person name="Brown D."/>
            <person name="Brown S."/>
            <person name="Chillingworth T."/>
            <person name="Churcher C.M."/>
            <person name="Collins M."/>
            <person name="Connor R."/>
            <person name="Cronin A."/>
            <person name="Davis P."/>
            <person name="Feltwell T."/>
            <person name="Fraser A."/>
            <person name="Gentles S."/>
            <person name="Goble A."/>
            <person name="Hamlin N."/>
            <person name="Harris D.E."/>
            <person name="Hidalgo J."/>
            <person name="Hodgson G."/>
            <person name="Holroyd S."/>
            <person name="Hornsby T."/>
            <person name="Howarth S."/>
            <person name="Huckle E.J."/>
            <person name="Hunt S."/>
            <person name="Jagels K."/>
            <person name="James K.D."/>
            <person name="Jones L."/>
            <person name="Jones M."/>
            <person name="Leather S."/>
            <person name="McDonald S."/>
            <person name="McLean J."/>
            <person name="Mooney P."/>
            <person name="Moule S."/>
            <person name="Mungall K.L."/>
            <person name="Murphy L.D."/>
            <person name="Niblett D."/>
            <person name="Odell C."/>
            <person name="Oliver K."/>
            <person name="O'Neil S."/>
            <person name="Pearson D."/>
            <person name="Quail M.A."/>
            <person name="Rabbinowitsch E."/>
            <person name="Rutherford K.M."/>
            <person name="Rutter S."/>
            <person name="Saunders D."/>
            <person name="Seeger K."/>
            <person name="Sharp S."/>
            <person name="Skelton J."/>
            <person name="Simmonds M.N."/>
            <person name="Squares R."/>
            <person name="Squares S."/>
            <person name="Stevens K."/>
            <person name="Taylor K."/>
            <person name="Taylor R.G."/>
            <person name="Tivey A."/>
            <person name="Walsh S.V."/>
            <person name="Warren T."/>
            <person name="Whitehead S."/>
            <person name="Woodward J.R."/>
            <person name="Volckaert G."/>
            <person name="Aert R."/>
            <person name="Robben J."/>
            <person name="Grymonprez B."/>
            <person name="Weltjens I."/>
            <person name="Vanstreels E."/>
            <person name="Rieger M."/>
            <person name="Schaefer M."/>
            <person name="Mueller-Auer S."/>
            <person name="Gabel C."/>
            <person name="Fuchs M."/>
            <person name="Duesterhoeft A."/>
            <person name="Fritzc C."/>
            <person name="Holzer E."/>
            <person name="Moestl D."/>
            <person name="Hilbert H."/>
            <person name="Borzym K."/>
            <person name="Langer I."/>
            <person name="Beck A."/>
            <person name="Lehrach H."/>
            <person name="Reinhardt R."/>
            <person name="Pohl T.M."/>
            <person name="Eger P."/>
            <person name="Zimmermann W."/>
            <person name="Wedler H."/>
            <person name="Wambutt R."/>
            <person name="Purnelle B."/>
            <person name="Goffeau A."/>
            <person name="Cadieu E."/>
            <person name="Dreano S."/>
            <person name="Gloux S."/>
            <person name="Lelaure V."/>
            <person name="Mottier S."/>
            <person name="Galibert F."/>
            <person name="Aves S.J."/>
            <person name="Xiang Z."/>
            <person name="Hunt C."/>
            <person name="Moore K."/>
            <person name="Hurst S.M."/>
            <person name="Lucas M."/>
            <person name="Rochet M."/>
            <person name="Gaillardin C."/>
            <person name="Tallada V.A."/>
            <person name="Garzon A."/>
            <person name="Thode G."/>
            <person name="Daga R.R."/>
            <person name="Cruzado L."/>
            <person name="Jimenez J."/>
            <person name="Sanchez M."/>
            <person name="del Rey F."/>
            <person name="Benito J."/>
            <person name="Dominguez A."/>
            <person name="Revuelta J.L."/>
            <person name="Moreno S."/>
            <person name="Armstrong J."/>
            <person name="Forsburg S.L."/>
            <person name="Cerutti L."/>
            <person name="Lowe T."/>
            <person name="McCombie W.R."/>
            <person name="Paulsen I."/>
            <person name="Potashkin J."/>
            <person name="Shpakovski G.V."/>
            <person name="Ussery D."/>
            <person name="Barrell B.G."/>
            <person name="Nurse P."/>
        </authorList>
    </citation>
    <scope>NUCLEOTIDE SEQUENCE [LARGE SCALE GENOMIC DNA]</scope>
    <source>
        <strain>972 / ATCC 24843</strain>
    </source>
</reference>
<reference key="2">
    <citation type="journal article" date="2006" name="Nat. Biotechnol.">
        <title>ORFeome cloning and global analysis of protein localization in the fission yeast Schizosaccharomyces pombe.</title>
        <authorList>
            <person name="Matsuyama A."/>
            <person name="Arai R."/>
            <person name="Yashiroda Y."/>
            <person name="Shirai A."/>
            <person name="Kamata A."/>
            <person name="Sekido S."/>
            <person name="Kobayashi Y."/>
            <person name="Hashimoto A."/>
            <person name="Hamamoto M."/>
            <person name="Hiraoka Y."/>
            <person name="Horinouchi S."/>
            <person name="Yoshida M."/>
        </authorList>
    </citation>
    <scope>SUBCELLULAR LOCATION [LARGE SCALE ANALYSIS]</scope>
</reference>
<organism>
    <name type="scientific">Schizosaccharomyces pombe (strain 972 / ATCC 24843)</name>
    <name type="common">Fission yeast</name>
    <dbReference type="NCBI Taxonomy" id="284812"/>
    <lineage>
        <taxon>Eukaryota</taxon>
        <taxon>Fungi</taxon>
        <taxon>Dikarya</taxon>
        <taxon>Ascomycota</taxon>
        <taxon>Taphrinomycotina</taxon>
        <taxon>Schizosaccharomycetes</taxon>
        <taxon>Schizosaccharomycetales</taxon>
        <taxon>Schizosaccharomycetaceae</taxon>
        <taxon>Schizosaccharomyces</taxon>
    </lineage>
</organism>
<dbReference type="EMBL" id="CU329671">
    <property type="protein sequence ID" value="CAC21410.1"/>
    <property type="molecule type" value="Genomic_DNA"/>
</dbReference>
<dbReference type="RefSeq" id="NP_596854.1">
    <property type="nucleotide sequence ID" value="NM_001023877.2"/>
</dbReference>
<dbReference type="BioGRID" id="277906">
    <property type="interactions" value="1"/>
</dbReference>
<dbReference type="STRING" id="284812.Q9HDU7"/>
<dbReference type="PaxDb" id="4896-SPBPB2B2.08.1"/>
<dbReference type="EnsemblFungi" id="SPBPB2B2.08.1">
    <property type="protein sequence ID" value="SPBPB2B2.08.1:pep"/>
    <property type="gene ID" value="SPBPB2B2.08"/>
</dbReference>
<dbReference type="KEGG" id="spo:2541397"/>
<dbReference type="PomBase" id="SPBPB2B2.08"/>
<dbReference type="VEuPathDB" id="FungiDB:SPBPB2B2.08"/>
<dbReference type="eggNOG" id="ENOG502S1N8">
    <property type="taxonomic scope" value="Eukaryota"/>
</dbReference>
<dbReference type="HOGENOM" id="CLU_068116_2_0_1"/>
<dbReference type="InParanoid" id="Q9HDU7"/>
<dbReference type="OMA" id="VWRSRED"/>
<dbReference type="PhylomeDB" id="Q9HDU7"/>
<dbReference type="PRO" id="PR:Q9HDU7"/>
<dbReference type="Proteomes" id="UP000002485">
    <property type="component" value="Chromosome II"/>
</dbReference>
<dbReference type="GO" id="GO:0005829">
    <property type="term" value="C:cytosol"/>
    <property type="evidence" value="ECO:0007005"/>
    <property type="project" value="PomBase"/>
</dbReference>
<dbReference type="GO" id="GO:0005634">
    <property type="term" value="C:nucleus"/>
    <property type="evidence" value="ECO:0007005"/>
    <property type="project" value="PomBase"/>
</dbReference>
<dbReference type="PANTHER" id="PTHR36986">
    <property type="entry name" value="UPF0643 PROTEIN PB2B2.08"/>
    <property type="match status" value="1"/>
</dbReference>
<dbReference type="PANTHER" id="PTHR36986:SF1">
    <property type="entry name" value="UPF0643 PROTEIN PB2B2.08"/>
    <property type="match status" value="1"/>
</dbReference>
<proteinExistence type="inferred from homology"/>
<gene>
    <name type="ORF">SPBPB2B2.08</name>
</gene>